<feature type="chain" id="PRO_0000280694" description="E3 ubiquitin-protein ligase arkadia-B">
    <location>
        <begin position="1"/>
        <end position="959"/>
    </location>
</feature>
<feature type="zinc finger region" description="RING-type; atypical" evidence="4">
    <location>
        <begin position="907"/>
        <end position="948"/>
    </location>
</feature>
<feature type="region of interest" description="Disordered" evidence="5">
    <location>
        <begin position="51"/>
        <end position="171"/>
    </location>
</feature>
<feature type="region of interest" description="Disordered" evidence="5">
    <location>
        <begin position="189"/>
        <end position="212"/>
    </location>
</feature>
<feature type="region of interest" description="Disordered" evidence="5">
    <location>
        <begin position="225"/>
        <end position="271"/>
    </location>
</feature>
<feature type="region of interest" description="Disordered" evidence="5">
    <location>
        <begin position="318"/>
        <end position="341"/>
    </location>
</feature>
<feature type="region of interest" description="Disordered" evidence="5">
    <location>
        <begin position="370"/>
        <end position="399"/>
    </location>
</feature>
<feature type="region of interest" description="Disordered" evidence="5">
    <location>
        <begin position="475"/>
        <end position="499"/>
    </location>
</feature>
<feature type="region of interest" description="Disordered" evidence="5">
    <location>
        <begin position="615"/>
        <end position="649"/>
    </location>
</feature>
<feature type="region of interest" description="Disordered" evidence="5">
    <location>
        <begin position="661"/>
        <end position="680"/>
    </location>
</feature>
<feature type="region of interest" description="Ubiquitin binding" evidence="2">
    <location>
        <begin position="872"/>
        <end position="874"/>
    </location>
</feature>
<feature type="region of interest" description="Ubiquitin binding" evidence="2">
    <location>
        <begin position="922"/>
        <end position="926"/>
    </location>
</feature>
<feature type="short sequence motif" description="SUMO interaction motif 1 (SIM)" evidence="1">
    <location>
        <begin position="275"/>
        <end position="279"/>
    </location>
</feature>
<feature type="short sequence motif" description="SUMO interaction motif 2 (SIM)" evidence="1">
    <location>
        <begin position="300"/>
        <end position="306"/>
    </location>
</feature>
<feature type="short sequence motif" description="SUMO interaction motif 3 (SIM)" evidence="1">
    <location>
        <begin position="355"/>
        <end position="359"/>
    </location>
</feature>
<feature type="compositionally biased region" description="Polar residues" evidence="5">
    <location>
        <begin position="51"/>
        <end position="66"/>
    </location>
</feature>
<feature type="compositionally biased region" description="Low complexity" evidence="5">
    <location>
        <begin position="112"/>
        <end position="131"/>
    </location>
</feature>
<feature type="compositionally biased region" description="Polar residues" evidence="5">
    <location>
        <begin position="142"/>
        <end position="156"/>
    </location>
</feature>
<feature type="compositionally biased region" description="Low complexity" evidence="5">
    <location>
        <begin position="228"/>
        <end position="246"/>
    </location>
</feature>
<feature type="compositionally biased region" description="Polar residues" evidence="5">
    <location>
        <begin position="256"/>
        <end position="267"/>
    </location>
</feature>
<feature type="compositionally biased region" description="Polar residues" evidence="5">
    <location>
        <begin position="323"/>
        <end position="332"/>
    </location>
</feature>
<feature type="compositionally biased region" description="Polar residues" evidence="5">
    <location>
        <begin position="370"/>
        <end position="397"/>
    </location>
</feature>
<feature type="compositionally biased region" description="Basic residues" evidence="5">
    <location>
        <begin position="475"/>
        <end position="487"/>
    </location>
</feature>
<feature type="compositionally biased region" description="Polar residues" evidence="5">
    <location>
        <begin position="620"/>
        <end position="632"/>
    </location>
</feature>
<feature type="compositionally biased region" description="Pro residues" evidence="5">
    <location>
        <begin position="633"/>
        <end position="646"/>
    </location>
</feature>
<feature type="binding site" evidence="2">
    <location>
        <position position="907"/>
    </location>
    <ligand>
        <name>Zn(2+)</name>
        <dbReference type="ChEBI" id="CHEBI:29105"/>
    </ligand>
</feature>
<feature type="binding site" evidence="2">
    <location>
        <position position="910"/>
    </location>
    <ligand>
        <name>Zn(2+)</name>
        <dbReference type="ChEBI" id="CHEBI:29105"/>
    </ligand>
</feature>
<feature type="binding site" evidence="2">
    <location>
        <position position="930"/>
    </location>
    <ligand>
        <name>Zn(2+)</name>
        <dbReference type="ChEBI" id="CHEBI:29105"/>
    </ligand>
</feature>
<feature type="binding site" evidence="2">
    <location>
        <position position="933"/>
    </location>
    <ligand>
        <name>Zn(2+)</name>
        <dbReference type="ChEBI" id="CHEBI:29105"/>
    </ligand>
</feature>
<accession>Q6NRV8</accession>
<gene>
    <name type="primary">rnf111-b</name>
</gene>
<keyword id="KW-0963">Cytoplasm</keyword>
<keyword id="KW-0217">Developmental protein</keyword>
<keyword id="KW-0227">DNA damage</keyword>
<keyword id="KW-0234">DNA repair</keyword>
<keyword id="KW-1017">Isopeptide bond</keyword>
<keyword id="KW-0479">Metal-binding</keyword>
<keyword id="KW-0539">Nucleus</keyword>
<keyword id="KW-1185">Reference proteome</keyword>
<keyword id="KW-0808">Transferase</keyword>
<keyword id="KW-0833">Ubl conjugation pathway</keyword>
<keyword id="KW-0862">Zinc</keyword>
<keyword id="KW-0863">Zinc-finger</keyword>
<dbReference type="EC" id="2.3.2.27"/>
<dbReference type="EMBL" id="BC070603">
    <property type="protein sequence ID" value="AAH70603.1"/>
    <property type="molecule type" value="mRNA"/>
</dbReference>
<dbReference type="RefSeq" id="NP_001090211.1">
    <property type="nucleotide sequence ID" value="NM_001096742.1"/>
</dbReference>
<dbReference type="SMR" id="Q6NRV8"/>
<dbReference type="DNASU" id="779113"/>
<dbReference type="GeneID" id="779113"/>
<dbReference type="KEGG" id="xla:779113"/>
<dbReference type="AGR" id="Xenbase:XB-GENE-6251809"/>
<dbReference type="CTD" id="779113"/>
<dbReference type="Xenbase" id="XB-GENE-6251809">
    <property type="gene designation" value="rnf111.S"/>
</dbReference>
<dbReference type="OrthoDB" id="8062037at2759"/>
<dbReference type="UniPathway" id="UPA00143"/>
<dbReference type="Proteomes" id="UP000186698">
    <property type="component" value="Chromosome 3S"/>
</dbReference>
<dbReference type="Bgee" id="779113">
    <property type="expression patterns" value="Expressed in blastula and 19 other cell types or tissues"/>
</dbReference>
<dbReference type="GO" id="GO:0005737">
    <property type="term" value="C:cytoplasm"/>
    <property type="evidence" value="ECO:0000318"/>
    <property type="project" value="GO_Central"/>
</dbReference>
<dbReference type="GO" id="GO:0005634">
    <property type="term" value="C:nucleus"/>
    <property type="evidence" value="ECO:0000318"/>
    <property type="project" value="GO_Central"/>
</dbReference>
<dbReference type="GO" id="GO:0016605">
    <property type="term" value="C:PML body"/>
    <property type="evidence" value="ECO:0007669"/>
    <property type="project" value="UniProtKB-SubCell"/>
</dbReference>
<dbReference type="GO" id="GO:0046332">
    <property type="term" value="F:SMAD binding"/>
    <property type="evidence" value="ECO:0000318"/>
    <property type="project" value="GO_Central"/>
</dbReference>
<dbReference type="GO" id="GO:0032184">
    <property type="term" value="F:SUMO polymer binding"/>
    <property type="evidence" value="ECO:0000318"/>
    <property type="project" value="GO_Central"/>
</dbReference>
<dbReference type="GO" id="GO:0061630">
    <property type="term" value="F:ubiquitin protein ligase activity"/>
    <property type="evidence" value="ECO:0000318"/>
    <property type="project" value="GO_Central"/>
</dbReference>
<dbReference type="GO" id="GO:0008270">
    <property type="term" value="F:zinc ion binding"/>
    <property type="evidence" value="ECO:0007669"/>
    <property type="project" value="UniProtKB-KW"/>
</dbReference>
<dbReference type="GO" id="GO:0006281">
    <property type="term" value="P:DNA repair"/>
    <property type="evidence" value="ECO:0007669"/>
    <property type="project" value="UniProtKB-KW"/>
</dbReference>
<dbReference type="GO" id="GO:0030511">
    <property type="term" value="P:positive regulation of transforming growth factor beta receptor signaling pathway"/>
    <property type="evidence" value="ECO:0000318"/>
    <property type="project" value="GO_Central"/>
</dbReference>
<dbReference type="GO" id="GO:0016567">
    <property type="term" value="P:protein ubiquitination"/>
    <property type="evidence" value="ECO:0007669"/>
    <property type="project" value="UniProtKB-UniPathway"/>
</dbReference>
<dbReference type="GO" id="GO:0006511">
    <property type="term" value="P:ubiquitin-dependent protein catabolic process"/>
    <property type="evidence" value="ECO:0000318"/>
    <property type="project" value="GO_Central"/>
</dbReference>
<dbReference type="CDD" id="cd16681">
    <property type="entry name" value="RING-H2_RNF111"/>
    <property type="match status" value="1"/>
</dbReference>
<dbReference type="FunFam" id="3.30.40.10:FF:000058">
    <property type="entry name" value="E3 ubiquitin-protein ligase Arkadia isoform X4"/>
    <property type="match status" value="1"/>
</dbReference>
<dbReference type="Gene3D" id="3.30.40.10">
    <property type="entry name" value="Zinc/RING finger domain, C3HC4 (zinc finger)"/>
    <property type="match status" value="1"/>
</dbReference>
<dbReference type="InterPro" id="IPR029306">
    <property type="entry name" value="RNF111_N"/>
</dbReference>
<dbReference type="InterPro" id="IPR001841">
    <property type="entry name" value="Znf_RING"/>
</dbReference>
<dbReference type="InterPro" id="IPR013083">
    <property type="entry name" value="Znf_RING/FYVE/PHD"/>
</dbReference>
<dbReference type="InterPro" id="IPR051073">
    <property type="entry name" value="ZNRF3_Arkadia_E3_ligases"/>
</dbReference>
<dbReference type="PANTHER" id="PTHR16200">
    <property type="entry name" value="RING ZINC FINGER"/>
    <property type="match status" value="1"/>
</dbReference>
<dbReference type="Pfam" id="PF15303">
    <property type="entry name" value="RNF111_N"/>
    <property type="match status" value="1"/>
</dbReference>
<dbReference type="Pfam" id="PF13639">
    <property type="entry name" value="zf-RING_2"/>
    <property type="match status" value="1"/>
</dbReference>
<dbReference type="SMART" id="SM00184">
    <property type="entry name" value="RING"/>
    <property type="match status" value="1"/>
</dbReference>
<dbReference type="SUPFAM" id="SSF57850">
    <property type="entry name" value="RING/U-box"/>
    <property type="match status" value="1"/>
</dbReference>
<dbReference type="PROSITE" id="PS50089">
    <property type="entry name" value="ZF_RING_2"/>
    <property type="match status" value="1"/>
</dbReference>
<proteinExistence type="evidence at transcript level"/>
<comment type="function">
    <text evidence="1 3">E3 ubiquitin-protein ligase required for mesoderm patterning during embryonic development (By similarity). Acts as an enhancer of the transcriptional responses of the smad2/smad3 effectors, which are activated downstream of BMP. Acts by mediating ubiquitination and degradation of SMAD inhibitors such as smad7, inducing their proteasomal degradation and thereby enhancing the transcriptional activity of TGF-beta and BMP. Specifically binds polysumoylated chains via SUMO interaction motifs (SIMs) and mediates ubiquitination of sumoylated substrates (By similarity). The regulation of the BMP-SMAD signaling is however independent of sumoylation and is not dependent of SUMO interaction motifs (SIMs) (By similarity).</text>
</comment>
<comment type="catalytic activity">
    <reaction evidence="1">
        <text>S-ubiquitinyl-[E2 ubiquitin-conjugating enzyme]-L-cysteine + [acceptor protein]-L-lysine = [E2 ubiquitin-conjugating enzyme]-L-cysteine + N(6)-ubiquitinyl-[acceptor protein]-L-lysine.</text>
        <dbReference type="EC" id="2.3.2.27"/>
    </reaction>
</comment>
<comment type="activity regulation">
    <text evidence="2">Binds free ubiquitin non-covalently via its RING-type zinc finger. Ubiquitin-binding leads to enhance the E3 ubiquitin-protein ligase activity by stabilizing the ubiquitin-conjugating enzyme E2 (donor ubiquitin) in the 'closed' conformation and activating ubiquitin transfer.</text>
</comment>
<comment type="pathway">
    <text evidence="1">Protein modification; protein ubiquitination.</text>
</comment>
<comment type="subunit">
    <text evidence="1 3">Monomer.</text>
</comment>
<comment type="subcellular location">
    <subcellularLocation>
        <location evidence="1">Nucleus</location>
    </subcellularLocation>
    <subcellularLocation>
        <location evidence="1">Cytoplasm</location>
    </subcellularLocation>
    <subcellularLocation>
        <location evidence="3">Nucleus</location>
        <location evidence="3">PML body</location>
    </subcellularLocation>
    <text evidence="1">Upon TGF-beta treatment, translocates from nucleus to cytosol.</text>
</comment>
<comment type="domain">
    <text evidence="1">The SUMO interaction motifs (SIMs) mediates the binding to polysumoylated substrate.</text>
</comment>
<comment type="domain">
    <text evidence="1 2">The RING-type zinc finger mediates the E3 ubiquitin-protein ligase activity and binds directly to free ubiquitin (By similarity). Non-covalent ubiquitin-binding stabilizes the ubiquitin-conjugating enzyme E2 (donor ubiquitin) in the 'closed' conformation and stimulates ubiquitin transfer (By similarity).</text>
</comment>
<comment type="similarity">
    <text evidence="6">Belongs to the Arkadia family.</text>
</comment>
<protein>
    <recommendedName>
        <fullName>E3 ubiquitin-protein ligase arkadia-B</fullName>
        <ecNumber>2.3.2.27</ecNumber>
    </recommendedName>
    <alternativeName>
        <fullName>RING finger protein 111-B</fullName>
    </alternativeName>
    <alternativeName>
        <fullName evidence="6">RING-type E3 ubiquitin transferase arkadia-B</fullName>
    </alternativeName>
</protein>
<reference key="1">
    <citation type="submission" date="2004-05" db="EMBL/GenBank/DDBJ databases">
        <authorList>
            <consortium name="NIH - Xenopus Gene Collection (XGC) project"/>
        </authorList>
    </citation>
    <scope>NUCLEOTIDE SEQUENCE [LARGE SCALE MRNA]</scope>
    <source>
        <tissue>Embryo</tissue>
    </source>
</reference>
<name>R111B_XENLA</name>
<evidence type="ECO:0000250" key="1">
    <source>
        <dbReference type="UniProtKB" id="Q6ZNA4"/>
    </source>
</evidence>
<evidence type="ECO:0000250" key="2">
    <source>
        <dbReference type="UniProtKB" id="Q6ZSG1"/>
    </source>
</evidence>
<evidence type="ECO:0000250" key="3">
    <source>
        <dbReference type="UniProtKB" id="Q99ML9"/>
    </source>
</evidence>
<evidence type="ECO:0000255" key="4">
    <source>
        <dbReference type="PROSITE-ProRule" id="PRU00175"/>
    </source>
</evidence>
<evidence type="ECO:0000256" key="5">
    <source>
        <dbReference type="SAM" id="MobiDB-lite"/>
    </source>
</evidence>
<evidence type="ECO:0000305" key="6"/>
<organism>
    <name type="scientific">Xenopus laevis</name>
    <name type="common">African clawed frog</name>
    <dbReference type="NCBI Taxonomy" id="8355"/>
    <lineage>
        <taxon>Eukaryota</taxon>
        <taxon>Metazoa</taxon>
        <taxon>Chordata</taxon>
        <taxon>Craniata</taxon>
        <taxon>Vertebrata</taxon>
        <taxon>Euteleostomi</taxon>
        <taxon>Amphibia</taxon>
        <taxon>Batrachia</taxon>
        <taxon>Anura</taxon>
        <taxon>Pipoidea</taxon>
        <taxon>Pipidae</taxon>
        <taxon>Xenopodinae</taxon>
        <taxon>Xenopus</taxon>
        <taxon>Xenopus</taxon>
    </lineage>
</organism>
<sequence>MKSEVSSDAPKRQENFKGVLLNPETIGASKSFPKEVEMIASKVSNEFNHLCSDTNKQQSDLNSNGTEQDKSLVVHKKRKSQQAGTSYAQSCEVKEYQRLLRLQPKSDEDNDSSFSDCISSPSSSSHFGDSDTMTSDEDKDNPLSSVNSTPRTQSARAQKWPRPHTDSVSSLLMKRPCYQVSSLRRPLHRKRFVKNVSSQRTQKQKERMMLQRKKREVLARQKYALLPSSSSSSENDLSSESSSSSSTEGEDLFVSTGENRQDGTTLPSGGMDEDVVVIEASSTPQVTANEEINVTSTDSEVEIVTVGETYRSRATLRHPRSHWGQNSQSGRTQEQRTRNRVSTVIQPLRQNTTEVVDLTVDEDDPTVVQTTSGRVESQPVSIVSSLTSTSEPASDSMSGLMGSAVPEIPAIPPNTVGTIADDSRTCTSGANADGGPPAMPRLPSCCPQHSPCGGSSQNHVLGHPHSSCFPPHSHHFPHHHHHHHHSSHPGVPLSPSFRDSHCTVERNAAVPPPCGVSSSSGSTYHDPQALPVDLSNNGIRSHGSVGFHSTSAFDPCCPGSSSRSTVYGHQATTSTAQTMAIDGYGSSMVAQAQPPPPTPLSSCRHYMHASYTSLPRPLHHQTSSCPHSNSASQPPPPPPPPPPPPMDYVIAHQVPFISPLPSLTSTHAVPPPPPSHHLSAAAAPLPQHLSTSHQSMSHHISATAPVTQRLHAHEVIQRMEVQRRRMMQHPTRAHERPPPHPHRMHPNYGHGHHIHVPQTMSSHPRQGPERSAWEIAIETGVTAATYQTGPLHTHLAHYHPPPRLHHLQIGALPLMVPDMAGYPHIRYISSGLDGRSFRVPFRGNFEELIHLEERLGNVNRGASQGTIERCTYPHKYKKVSTDWFSQRKLHSKQDGEEATEEDTEEKCTICLSILEEGEDVRRLPCMHLFHQVCVDQWLITNKKCPICRVDIDTQLPTES</sequence>